<evidence type="ECO:0000255" key="1">
    <source>
        <dbReference type="HAMAP-Rule" id="MF_00016"/>
    </source>
</evidence>
<protein>
    <recommendedName>
        <fullName evidence="1">Holliday junction branch migration complex subunit RuvB</fullName>
        <ecNumber evidence="1">3.6.4.-</ecNumber>
    </recommendedName>
</protein>
<dbReference type="EC" id="3.6.4.-" evidence="1"/>
<dbReference type="EMBL" id="FM242711">
    <property type="protein sequence ID" value="CAS05304.1"/>
    <property type="molecule type" value="Genomic_DNA"/>
</dbReference>
<dbReference type="RefSeq" id="WP_003727396.1">
    <property type="nucleotide sequence ID" value="NC_012488.1"/>
</dbReference>
<dbReference type="SMR" id="C1KVH9"/>
<dbReference type="KEGG" id="lmc:Lm4b_01542"/>
<dbReference type="HOGENOM" id="CLU_055599_1_0_9"/>
<dbReference type="GO" id="GO:0005737">
    <property type="term" value="C:cytoplasm"/>
    <property type="evidence" value="ECO:0007669"/>
    <property type="project" value="UniProtKB-SubCell"/>
</dbReference>
<dbReference type="GO" id="GO:0048476">
    <property type="term" value="C:Holliday junction resolvase complex"/>
    <property type="evidence" value="ECO:0007669"/>
    <property type="project" value="UniProtKB-UniRule"/>
</dbReference>
<dbReference type="GO" id="GO:0005524">
    <property type="term" value="F:ATP binding"/>
    <property type="evidence" value="ECO:0007669"/>
    <property type="project" value="UniProtKB-UniRule"/>
</dbReference>
<dbReference type="GO" id="GO:0016887">
    <property type="term" value="F:ATP hydrolysis activity"/>
    <property type="evidence" value="ECO:0007669"/>
    <property type="project" value="InterPro"/>
</dbReference>
<dbReference type="GO" id="GO:0000400">
    <property type="term" value="F:four-way junction DNA binding"/>
    <property type="evidence" value="ECO:0007669"/>
    <property type="project" value="UniProtKB-UniRule"/>
</dbReference>
<dbReference type="GO" id="GO:0009378">
    <property type="term" value="F:four-way junction helicase activity"/>
    <property type="evidence" value="ECO:0007669"/>
    <property type="project" value="InterPro"/>
</dbReference>
<dbReference type="GO" id="GO:0006310">
    <property type="term" value="P:DNA recombination"/>
    <property type="evidence" value="ECO:0007669"/>
    <property type="project" value="UniProtKB-UniRule"/>
</dbReference>
<dbReference type="GO" id="GO:0006281">
    <property type="term" value="P:DNA repair"/>
    <property type="evidence" value="ECO:0007669"/>
    <property type="project" value="UniProtKB-UniRule"/>
</dbReference>
<dbReference type="CDD" id="cd00009">
    <property type="entry name" value="AAA"/>
    <property type="match status" value="1"/>
</dbReference>
<dbReference type="Gene3D" id="1.10.8.60">
    <property type="match status" value="1"/>
</dbReference>
<dbReference type="Gene3D" id="3.40.50.300">
    <property type="entry name" value="P-loop containing nucleotide triphosphate hydrolases"/>
    <property type="match status" value="1"/>
</dbReference>
<dbReference type="Gene3D" id="1.10.10.10">
    <property type="entry name" value="Winged helix-like DNA-binding domain superfamily/Winged helix DNA-binding domain"/>
    <property type="match status" value="1"/>
</dbReference>
<dbReference type="HAMAP" id="MF_00016">
    <property type="entry name" value="DNA_HJ_migration_RuvB"/>
    <property type="match status" value="1"/>
</dbReference>
<dbReference type="InterPro" id="IPR003593">
    <property type="entry name" value="AAA+_ATPase"/>
</dbReference>
<dbReference type="InterPro" id="IPR041445">
    <property type="entry name" value="AAA_lid_4"/>
</dbReference>
<dbReference type="InterPro" id="IPR004605">
    <property type="entry name" value="DNA_helicase_Holl-junc_RuvB"/>
</dbReference>
<dbReference type="InterPro" id="IPR027417">
    <property type="entry name" value="P-loop_NTPase"/>
</dbReference>
<dbReference type="InterPro" id="IPR008824">
    <property type="entry name" value="RuvB-like_N"/>
</dbReference>
<dbReference type="InterPro" id="IPR008823">
    <property type="entry name" value="RuvB_C"/>
</dbReference>
<dbReference type="InterPro" id="IPR036388">
    <property type="entry name" value="WH-like_DNA-bd_sf"/>
</dbReference>
<dbReference type="InterPro" id="IPR036390">
    <property type="entry name" value="WH_DNA-bd_sf"/>
</dbReference>
<dbReference type="NCBIfam" id="NF000868">
    <property type="entry name" value="PRK00080.1"/>
    <property type="match status" value="1"/>
</dbReference>
<dbReference type="NCBIfam" id="TIGR00635">
    <property type="entry name" value="ruvB"/>
    <property type="match status" value="1"/>
</dbReference>
<dbReference type="PANTHER" id="PTHR42848">
    <property type="match status" value="1"/>
</dbReference>
<dbReference type="PANTHER" id="PTHR42848:SF1">
    <property type="entry name" value="HOLLIDAY JUNCTION BRANCH MIGRATION COMPLEX SUBUNIT RUVB"/>
    <property type="match status" value="1"/>
</dbReference>
<dbReference type="Pfam" id="PF17864">
    <property type="entry name" value="AAA_lid_4"/>
    <property type="match status" value="1"/>
</dbReference>
<dbReference type="Pfam" id="PF05491">
    <property type="entry name" value="RuvB_C"/>
    <property type="match status" value="1"/>
</dbReference>
<dbReference type="Pfam" id="PF05496">
    <property type="entry name" value="RuvB_N"/>
    <property type="match status" value="1"/>
</dbReference>
<dbReference type="SMART" id="SM00382">
    <property type="entry name" value="AAA"/>
    <property type="match status" value="1"/>
</dbReference>
<dbReference type="SUPFAM" id="SSF52540">
    <property type="entry name" value="P-loop containing nucleoside triphosphate hydrolases"/>
    <property type="match status" value="1"/>
</dbReference>
<dbReference type="SUPFAM" id="SSF46785">
    <property type="entry name" value="Winged helix' DNA-binding domain"/>
    <property type="match status" value="1"/>
</dbReference>
<proteinExistence type="inferred from homology"/>
<feature type="chain" id="PRO_1000201841" description="Holliday junction branch migration complex subunit RuvB">
    <location>
        <begin position="1"/>
        <end position="335"/>
    </location>
</feature>
<feature type="region of interest" description="Large ATPase domain (RuvB-L)" evidence="1">
    <location>
        <begin position="1"/>
        <end position="183"/>
    </location>
</feature>
<feature type="region of interest" description="Small ATPAse domain (RuvB-S)" evidence="1">
    <location>
        <begin position="184"/>
        <end position="254"/>
    </location>
</feature>
<feature type="region of interest" description="Head domain (RuvB-H)" evidence="1">
    <location>
        <begin position="257"/>
        <end position="335"/>
    </location>
</feature>
<feature type="binding site" evidence="1">
    <location>
        <position position="22"/>
    </location>
    <ligand>
        <name>ATP</name>
        <dbReference type="ChEBI" id="CHEBI:30616"/>
    </ligand>
</feature>
<feature type="binding site" evidence="1">
    <location>
        <position position="23"/>
    </location>
    <ligand>
        <name>ATP</name>
        <dbReference type="ChEBI" id="CHEBI:30616"/>
    </ligand>
</feature>
<feature type="binding site" evidence="1">
    <location>
        <position position="64"/>
    </location>
    <ligand>
        <name>ATP</name>
        <dbReference type="ChEBI" id="CHEBI:30616"/>
    </ligand>
</feature>
<feature type="binding site" evidence="1">
    <location>
        <position position="67"/>
    </location>
    <ligand>
        <name>ATP</name>
        <dbReference type="ChEBI" id="CHEBI:30616"/>
    </ligand>
</feature>
<feature type="binding site" evidence="1">
    <location>
        <position position="68"/>
    </location>
    <ligand>
        <name>ATP</name>
        <dbReference type="ChEBI" id="CHEBI:30616"/>
    </ligand>
</feature>
<feature type="binding site" evidence="1">
    <location>
        <position position="68"/>
    </location>
    <ligand>
        <name>Mg(2+)</name>
        <dbReference type="ChEBI" id="CHEBI:18420"/>
    </ligand>
</feature>
<feature type="binding site" evidence="1">
    <location>
        <position position="69"/>
    </location>
    <ligand>
        <name>ATP</name>
        <dbReference type="ChEBI" id="CHEBI:30616"/>
    </ligand>
</feature>
<feature type="binding site" evidence="1">
    <location>
        <begin position="130"/>
        <end position="132"/>
    </location>
    <ligand>
        <name>ATP</name>
        <dbReference type="ChEBI" id="CHEBI:30616"/>
    </ligand>
</feature>
<feature type="binding site" evidence="1">
    <location>
        <position position="173"/>
    </location>
    <ligand>
        <name>ATP</name>
        <dbReference type="ChEBI" id="CHEBI:30616"/>
    </ligand>
</feature>
<feature type="binding site" evidence="1">
    <location>
        <position position="183"/>
    </location>
    <ligand>
        <name>ATP</name>
        <dbReference type="ChEBI" id="CHEBI:30616"/>
    </ligand>
</feature>
<feature type="binding site" evidence="1">
    <location>
        <position position="220"/>
    </location>
    <ligand>
        <name>ATP</name>
        <dbReference type="ChEBI" id="CHEBI:30616"/>
    </ligand>
</feature>
<feature type="binding site" evidence="1">
    <location>
        <position position="293"/>
    </location>
    <ligand>
        <name>DNA</name>
        <dbReference type="ChEBI" id="CHEBI:16991"/>
    </ligand>
</feature>
<feature type="binding site" evidence="1">
    <location>
        <position position="312"/>
    </location>
    <ligand>
        <name>DNA</name>
        <dbReference type="ChEBI" id="CHEBI:16991"/>
    </ligand>
</feature>
<feature type="binding site" evidence="1">
    <location>
        <position position="317"/>
    </location>
    <ligand>
        <name>DNA</name>
        <dbReference type="ChEBI" id="CHEBI:16991"/>
    </ligand>
</feature>
<organism>
    <name type="scientific">Listeria monocytogenes serotype 4b (strain CLIP80459)</name>
    <dbReference type="NCBI Taxonomy" id="568819"/>
    <lineage>
        <taxon>Bacteria</taxon>
        <taxon>Bacillati</taxon>
        <taxon>Bacillota</taxon>
        <taxon>Bacilli</taxon>
        <taxon>Bacillales</taxon>
        <taxon>Listeriaceae</taxon>
        <taxon>Listeria</taxon>
    </lineage>
</organism>
<sequence>MDERIISSETVDAEEVSFETSLRPQNLSQYIGQDKVKNNLTVFIEAATLRNEALDHVLLYGPPGLGKTTLAMVIAAEMGSQIKTTSGPAIERPGDLATILTSLEPGDVLFIDEIHRLSRAIEEILYPAMEDYCLDIVIGTGPTARSVRLDLPPFTLIGATTRAGLLSAPLRDRFGVIDHLEFYTEEQLTEIVLRTSNILDTKIDDLGAREIARRSRGTPRIANRLLKRVRDFAQVRGNGTVTEKLAKEALTLLQVDPRGLDTIDQKLLHTIIQSFRGGPVGLDTIAASIGEERETIEDMQEPYLLQIGFLQRTPRGRIATETAYNHLGISYEKEV</sequence>
<name>RUVB_LISMC</name>
<reference key="1">
    <citation type="journal article" date="2012" name="BMC Genomics">
        <title>Comparative genomics and transcriptomics of lineages I, II, and III strains of Listeria monocytogenes.</title>
        <authorList>
            <person name="Hain T."/>
            <person name="Ghai R."/>
            <person name="Billion A."/>
            <person name="Kuenne C.T."/>
            <person name="Steinweg C."/>
            <person name="Izar B."/>
            <person name="Mohamed W."/>
            <person name="Mraheil M."/>
            <person name="Domann E."/>
            <person name="Schaffrath S."/>
            <person name="Karst U."/>
            <person name="Goesmann A."/>
            <person name="Oehm S."/>
            <person name="Puhler A."/>
            <person name="Merkl R."/>
            <person name="Vorwerk S."/>
            <person name="Glaser P."/>
            <person name="Garrido P."/>
            <person name="Rusniok C."/>
            <person name="Buchrieser C."/>
            <person name="Goebel W."/>
            <person name="Chakraborty T."/>
        </authorList>
    </citation>
    <scope>NUCLEOTIDE SEQUENCE [LARGE SCALE GENOMIC DNA]</scope>
    <source>
        <strain>CLIP80459</strain>
    </source>
</reference>
<keyword id="KW-0067">ATP-binding</keyword>
<keyword id="KW-0963">Cytoplasm</keyword>
<keyword id="KW-0227">DNA damage</keyword>
<keyword id="KW-0233">DNA recombination</keyword>
<keyword id="KW-0234">DNA repair</keyword>
<keyword id="KW-0238">DNA-binding</keyword>
<keyword id="KW-0378">Hydrolase</keyword>
<keyword id="KW-0547">Nucleotide-binding</keyword>
<accession>C1KVH9</accession>
<comment type="function">
    <text evidence="1">The RuvA-RuvB-RuvC complex processes Holliday junction (HJ) DNA during genetic recombination and DNA repair, while the RuvA-RuvB complex plays an important role in the rescue of blocked DNA replication forks via replication fork reversal (RFR). RuvA specifically binds to HJ cruciform DNA, conferring on it an open structure. The RuvB hexamer acts as an ATP-dependent pump, pulling dsDNA into and through the RuvAB complex. RuvB forms 2 homohexamers on either side of HJ DNA bound by 1 or 2 RuvA tetramers; 4 subunits per hexamer contact DNA at a time. Coordinated motions by a converter formed by DNA-disengaged RuvB subunits stimulates ATP hydrolysis and nucleotide exchange. Immobilization of the converter enables RuvB to convert the ATP-contained energy into a lever motion, pulling 2 nucleotides of DNA out of the RuvA tetramer per ATP hydrolyzed, thus driving DNA branch migration. The RuvB motors rotate together with the DNA substrate, which together with the progressing nucleotide cycle form the mechanistic basis for DNA recombination by continuous HJ branch migration. Branch migration allows RuvC to scan DNA until it finds its consensus sequence, where it cleaves and resolves cruciform DNA.</text>
</comment>
<comment type="catalytic activity">
    <reaction evidence="1">
        <text>ATP + H2O = ADP + phosphate + H(+)</text>
        <dbReference type="Rhea" id="RHEA:13065"/>
        <dbReference type="ChEBI" id="CHEBI:15377"/>
        <dbReference type="ChEBI" id="CHEBI:15378"/>
        <dbReference type="ChEBI" id="CHEBI:30616"/>
        <dbReference type="ChEBI" id="CHEBI:43474"/>
        <dbReference type="ChEBI" id="CHEBI:456216"/>
    </reaction>
</comment>
<comment type="subunit">
    <text evidence="1">Homohexamer. Forms an RuvA(8)-RuvB(12)-Holliday junction (HJ) complex. HJ DNA is sandwiched between 2 RuvA tetramers; dsDNA enters through RuvA and exits via RuvB. An RuvB hexamer assembles on each DNA strand where it exits the tetramer. Each RuvB hexamer is contacted by two RuvA subunits (via domain III) on 2 adjacent RuvB subunits; this complex drives branch migration. In the full resolvosome a probable DNA-RuvA(4)-RuvB(12)-RuvC(2) complex forms which resolves the HJ.</text>
</comment>
<comment type="subcellular location">
    <subcellularLocation>
        <location evidence="1">Cytoplasm</location>
    </subcellularLocation>
</comment>
<comment type="domain">
    <text evidence="1">Has 3 domains, the large (RuvB-L) and small ATPase (RuvB-S) domains and the C-terminal head (RuvB-H) domain. The head domain binds DNA, while the ATPase domains jointly bind ATP, ADP or are empty depending on the state of the subunit in the translocation cycle. During a single DNA translocation step the structure of each domain remains the same, but their relative positions change.</text>
</comment>
<comment type="similarity">
    <text evidence="1">Belongs to the RuvB family.</text>
</comment>
<gene>
    <name evidence="1" type="primary">ruvB</name>
    <name type="ordered locus">Lm4b_01542</name>
</gene>